<name>MYF6_CHICK</name>
<gene>
    <name type="primary">MYF6</name>
    <name type="synonym">MRF4</name>
</gene>
<protein>
    <recommendedName>
        <fullName>Myogenic factor 6</fullName>
        <shortName>Myf-6</shortName>
    </recommendedName>
    <alternativeName>
        <fullName>Muscle-specific regulatory factor 4</fullName>
    </alternativeName>
</protein>
<feature type="chain" id="PRO_0000127355" description="Myogenic factor 6">
    <location>
        <begin position="1"/>
        <end position="242"/>
    </location>
</feature>
<feature type="domain" description="bHLH" evidence="1">
    <location>
        <begin position="93"/>
        <end position="144"/>
    </location>
</feature>
<feature type="region of interest" description="Disordered" evidence="2">
    <location>
        <begin position="30"/>
        <end position="63"/>
    </location>
</feature>
<feature type="region of interest" description="Disordered" evidence="2">
    <location>
        <begin position="190"/>
        <end position="210"/>
    </location>
</feature>
<organism>
    <name type="scientific">Gallus gallus</name>
    <name type="common">Chicken</name>
    <dbReference type="NCBI Taxonomy" id="9031"/>
    <lineage>
        <taxon>Eukaryota</taxon>
        <taxon>Metazoa</taxon>
        <taxon>Chordata</taxon>
        <taxon>Craniata</taxon>
        <taxon>Vertebrata</taxon>
        <taxon>Euteleostomi</taxon>
        <taxon>Archelosauria</taxon>
        <taxon>Archosauria</taxon>
        <taxon>Dinosauria</taxon>
        <taxon>Saurischia</taxon>
        <taxon>Theropoda</taxon>
        <taxon>Coelurosauria</taxon>
        <taxon>Aves</taxon>
        <taxon>Neognathae</taxon>
        <taxon>Galloanserae</taxon>
        <taxon>Galliformes</taxon>
        <taxon>Phasianidae</taxon>
        <taxon>Phasianinae</taxon>
        <taxon>Gallus</taxon>
    </lineage>
</organism>
<accession>Q01795</accession>
<evidence type="ECO:0000255" key="1">
    <source>
        <dbReference type="PROSITE-ProRule" id="PRU00981"/>
    </source>
</evidence>
<evidence type="ECO:0000256" key="2">
    <source>
        <dbReference type="SAM" id="MobiDB-lite"/>
    </source>
</evidence>
<dbReference type="EMBL" id="D10599">
    <property type="protein sequence ID" value="BAA01450.1"/>
    <property type="molecule type" value="mRNA"/>
</dbReference>
<dbReference type="PIR" id="A42668">
    <property type="entry name" value="A42668"/>
</dbReference>
<dbReference type="RefSeq" id="NP_001025917.1">
    <property type="nucleotide sequence ID" value="NM_001030746.3"/>
</dbReference>
<dbReference type="SMR" id="Q01795"/>
<dbReference type="FunCoup" id="Q01795">
    <property type="interactions" value="27"/>
</dbReference>
<dbReference type="STRING" id="9031.ENSGALP00000070971"/>
<dbReference type="PaxDb" id="9031-ENSGALP00000030023"/>
<dbReference type="Ensembl" id="ENSGALT00010029360.1">
    <property type="protein sequence ID" value="ENSGALP00010017051.1"/>
    <property type="gene ID" value="ENSGALG00010012253.1"/>
</dbReference>
<dbReference type="GeneID" id="417873"/>
<dbReference type="KEGG" id="gga:417873"/>
<dbReference type="CTD" id="4618"/>
<dbReference type="VEuPathDB" id="HostDB:geneid_417873"/>
<dbReference type="eggNOG" id="KOG3960">
    <property type="taxonomic scope" value="Eukaryota"/>
</dbReference>
<dbReference type="GeneTree" id="ENSGT00950000182959"/>
<dbReference type="HOGENOM" id="CLU_100258_0_0_1"/>
<dbReference type="InParanoid" id="Q01795"/>
<dbReference type="OMA" id="SPCQDQI"/>
<dbReference type="OrthoDB" id="10049614at2759"/>
<dbReference type="PhylomeDB" id="Q01795"/>
<dbReference type="Reactome" id="R-GGA-525793">
    <property type="pathway name" value="Myogenesis"/>
</dbReference>
<dbReference type="PRO" id="PR:Q01795"/>
<dbReference type="Proteomes" id="UP000000539">
    <property type="component" value="Chromosome 1"/>
</dbReference>
<dbReference type="Bgee" id="ENSGALG00000010936">
    <property type="expression patterns" value="Expressed in muscle tissue and 4 other cell types or tissues"/>
</dbReference>
<dbReference type="GO" id="GO:0005829">
    <property type="term" value="C:cytosol"/>
    <property type="evidence" value="ECO:0007669"/>
    <property type="project" value="Ensembl"/>
</dbReference>
<dbReference type="GO" id="GO:0072686">
    <property type="term" value="C:mitotic spindle"/>
    <property type="evidence" value="ECO:0007669"/>
    <property type="project" value="Ensembl"/>
</dbReference>
<dbReference type="GO" id="GO:0005654">
    <property type="term" value="C:nucleoplasm"/>
    <property type="evidence" value="ECO:0007669"/>
    <property type="project" value="Ensembl"/>
</dbReference>
<dbReference type="GO" id="GO:0090575">
    <property type="term" value="C:RNA polymerase II transcription regulator complex"/>
    <property type="evidence" value="ECO:0000314"/>
    <property type="project" value="BHF-UCL"/>
</dbReference>
<dbReference type="GO" id="GO:0043425">
    <property type="term" value="F:bHLH transcription factor binding"/>
    <property type="evidence" value="ECO:0000353"/>
    <property type="project" value="BHF-UCL"/>
</dbReference>
<dbReference type="GO" id="GO:0001228">
    <property type="term" value="F:DNA-binding transcription activator activity, RNA polymerase II-specific"/>
    <property type="evidence" value="ECO:0007669"/>
    <property type="project" value="Ensembl"/>
</dbReference>
<dbReference type="GO" id="GO:0000981">
    <property type="term" value="F:DNA-binding transcription factor activity, RNA polymerase II-specific"/>
    <property type="evidence" value="ECO:0000318"/>
    <property type="project" value="GO_Central"/>
</dbReference>
<dbReference type="GO" id="GO:0046983">
    <property type="term" value="F:protein dimerization activity"/>
    <property type="evidence" value="ECO:0007669"/>
    <property type="project" value="InterPro"/>
</dbReference>
<dbReference type="GO" id="GO:0000978">
    <property type="term" value="F:RNA polymerase II cis-regulatory region sequence-specific DNA binding"/>
    <property type="evidence" value="ECO:0000318"/>
    <property type="project" value="GO_Central"/>
</dbReference>
<dbReference type="GO" id="GO:0042693">
    <property type="term" value="P:muscle cell fate commitment"/>
    <property type="evidence" value="ECO:0000314"/>
    <property type="project" value="BHF-UCL"/>
</dbReference>
<dbReference type="GO" id="GO:0060415">
    <property type="term" value="P:muscle tissue morphogenesis"/>
    <property type="evidence" value="ECO:0007669"/>
    <property type="project" value="Ensembl"/>
</dbReference>
<dbReference type="GO" id="GO:0045892">
    <property type="term" value="P:negative regulation of DNA-templated transcription"/>
    <property type="evidence" value="ECO:0007669"/>
    <property type="project" value="Ensembl"/>
</dbReference>
<dbReference type="GO" id="GO:0045663">
    <property type="term" value="P:positive regulation of myoblast differentiation"/>
    <property type="evidence" value="ECO:0000318"/>
    <property type="project" value="GO_Central"/>
</dbReference>
<dbReference type="GO" id="GO:0048743">
    <property type="term" value="P:positive regulation of skeletal muscle fiber development"/>
    <property type="evidence" value="ECO:0000318"/>
    <property type="project" value="GO_Central"/>
</dbReference>
<dbReference type="GO" id="GO:0045944">
    <property type="term" value="P:positive regulation of transcription by RNA polymerase II"/>
    <property type="evidence" value="ECO:0000314"/>
    <property type="project" value="BHF-UCL"/>
</dbReference>
<dbReference type="GO" id="GO:0006357">
    <property type="term" value="P:regulation of transcription by RNA polymerase II"/>
    <property type="evidence" value="ECO:0000318"/>
    <property type="project" value="GO_Central"/>
</dbReference>
<dbReference type="GO" id="GO:0035914">
    <property type="term" value="P:skeletal muscle cell differentiation"/>
    <property type="evidence" value="ECO:0000318"/>
    <property type="project" value="GO_Central"/>
</dbReference>
<dbReference type="GO" id="GO:0001756">
    <property type="term" value="P:somitogenesis"/>
    <property type="evidence" value="ECO:0007669"/>
    <property type="project" value="Ensembl"/>
</dbReference>
<dbReference type="CDD" id="cd18934">
    <property type="entry name" value="bHLH_TS_MRF4_Myf6"/>
    <property type="match status" value="1"/>
</dbReference>
<dbReference type="FunFam" id="4.10.280.10:FF:000005">
    <property type="entry name" value="Myogenic factor"/>
    <property type="match status" value="1"/>
</dbReference>
<dbReference type="Gene3D" id="4.10.280.10">
    <property type="entry name" value="Helix-loop-helix DNA-binding domain"/>
    <property type="match status" value="1"/>
</dbReference>
<dbReference type="InterPro" id="IPR011598">
    <property type="entry name" value="bHLH_dom"/>
</dbReference>
<dbReference type="InterPro" id="IPR036638">
    <property type="entry name" value="HLH_DNA-bd_sf"/>
</dbReference>
<dbReference type="InterPro" id="IPR002546">
    <property type="entry name" value="MyoD_N"/>
</dbReference>
<dbReference type="InterPro" id="IPR039704">
    <property type="entry name" value="Myogenic_factor"/>
</dbReference>
<dbReference type="PANTHER" id="PTHR11534">
    <property type="entry name" value="MYOGENIC FACTOR"/>
    <property type="match status" value="1"/>
</dbReference>
<dbReference type="PANTHER" id="PTHR11534:SF4">
    <property type="entry name" value="MYOGENIC FACTOR 6"/>
    <property type="match status" value="1"/>
</dbReference>
<dbReference type="Pfam" id="PF01586">
    <property type="entry name" value="Basic"/>
    <property type="match status" value="1"/>
</dbReference>
<dbReference type="Pfam" id="PF00010">
    <property type="entry name" value="HLH"/>
    <property type="match status" value="1"/>
</dbReference>
<dbReference type="SMART" id="SM00520">
    <property type="entry name" value="BASIC"/>
    <property type="match status" value="1"/>
</dbReference>
<dbReference type="SMART" id="SM00353">
    <property type="entry name" value="HLH"/>
    <property type="match status" value="1"/>
</dbReference>
<dbReference type="SUPFAM" id="SSF47459">
    <property type="entry name" value="HLH, helix-loop-helix DNA-binding domain"/>
    <property type="match status" value="1"/>
</dbReference>
<dbReference type="PROSITE" id="PS50888">
    <property type="entry name" value="BHLH"/>
    <property type="match status" value="1"/>
</dbReference>
<comment type="function">
    <text>Involved in muscle differentiation (myogenic factor). Induces fibroblasts to differentiate into myoblasts. Probable sequence specific DNA-binding protein.</text>
</comment>
<comment type="subunit">
    <text>Efficient DNA binding requires dimerization with another bHLH protein.</text>
</comment>
<comment type="subcellular location">
    <subcellularLocation>
        <location>Nucleus</location>
    </subcellularLocation>
</comment>
<comment type="tissue specificity">
    <text>Skeletal muscle.</text>
</comment>
<sequence>MMMDLFETGSYFFYLDGENGALQQLEMAEGSPLYPGSDGTLSPCQDQLPPEAGSDSSGEEHVLAPPGLQPPHCPGQCLIWACKTCKRKSAPTDRRKAATLRERRRLKKINEAFEALKRRTVANPNQRLPKVEILRSAISYIERLQDLLHRLDQQDKMQEVAADPFSFSPKQGNVPGSDFLSTCGSDWHSASDHSRALGGSPKAGGSMVESSASSSLRCLSSIVDSISSDEPKLPGAEEAVEK</sequence>
<reference key="1">
    <citation type="journal article" date="1992" name="J. Biol. Chem.">
        <title>Differential trans-activation of muscle-specific regulatory elements including the mysosin light chain box by chicken MyoD, myogenin, and MRF4.</title>
        <authorList>
            <person name="Fujisawa-Sehara A."/>
            <person name="Nabeshima Y."/>
            <person name="Komiya T."/>
            <person name="Uetsuki T."/>
            <person name="Asakura A."/>
            <person name="Nabeshima Y."/>
        </authorList>
    </citation>
    <scope>NUCLEOTIDE SEQUENCE [MRNA]</scope>
</reference>
<proteinExistence type="evidence at transcript level"/>
<keyword id="KW-0217">Developmental protein</keyword>
<keyword id="KW-0221">Differentiation</keyword>
<keyword id="KW-0238">DNA-binding</keyword>
<keyword id="KW-0517">Myogenesis</keyword>
<keyword id="KW-0539">Nucleus</keyword>
<keyword id="KW-1185">Reference proteome</keyword>